<evidence type="ECO:0000255" key="1">
    <source>
        <dbReference type="HAMAP-Rule" id="MF_01702"/>
    </source>
</evidence>
<evidence type="ECO:0000305" key="2"/>
<dbReference type="EC" id="7.3.2.1" evidence="1"/>
<dbReference type="EMBL" id="AE008917">
    <property type="protein sequence ID" value="AAL53167.1"/>
    <property type="status" value="ALT_INIT"/>
    <property type="molecule type" value="Genomic_DNA"/>
</dbReference>
<dbReference type="PIR" id="AD3500">
    <property type="entry name" value="AD3500"/>
</dbReference>
<dbReference type="RefSeq" id="WP_002965205.1">
    <property type="nucleotide sequence ID" value="NZ_GG703778.1"/>
</dbReference>
<dbReference type="SMR" id="P63361"/>
<dbReference type="GeneID" id="97534603"/>
<dbReference type="KEGG" id="bme:BMEI1986"/>
<dbReference type="eggNOG" id="COG1117">
    <property type="taxonomic scope" value="Bacteria"/>
</dbReference>
<dbReference type="PhylomeDB" id="P63361"/>
<dbReference type="Proteomes" id="UP000000419">
    <property type="component" value="Chromosome I"/>
</dbReference>
<dbReference type="GO" id="GO:0005886">
    <property type="term" value="C:plasma membrane"/>
    <property type="evidence" value="ECO:0007669"/>
    <property type="project" value="UniProtKB-SubCell"/>
</dbReference>
<dbReference type="GO" id="GO:0005524">
    <property type="term" value="F:ATP binding"/>
    <property type="evidence" value="ECO:0007669"/>
    <property type="project" value="UniProtKB-KW"/>
</dbReference>
<dbReference type="GO" id="GO:0016887">
    <property type="term" value="F:ATP hydrolysis activity"/>
    <property type="evidence" value="ECO:0007669"/>
    <property type="project" value="InterPro"/>
</dbReference>
<dbReference type="GO" id="GO:0015415">
    <property type="term" value="F:ATPase-coupled phosphate ion transmembrane transporter activity"/>
    <property type="evidence" value="ECO:0007669"/>
    <property type="project" value="UniProtKB-EC"/>
</dbReference>
<dbReference type="GO" id="GO:0035435">
    <property type="term" value="P:phosphate ion transmembrane transport"/>
    <property type="evidence" value="ECO:0007669"/>
    <property type="project" value="InterPro"/>
</dbReference>
<dbReference type="CDD" id="cd03260">
    <property type="entry name" value="ABC_PstB_phosphate_transporter"/>
    <property type="match status" value="1"/>
</dbReference>
<dbReference type="Gene3D" id="3.40.50.300">
    <property type="entry name" value="P-loop containing nucleotide triphosphate hydrolases"/>
    <property type="match status" value="1"/>
</dbReference>
<dbReference type="InterPro" id="IPR003593">
    <property type="entry name" value="AAA+_ATPase"/>
</dbReference>
<dbReference type="InterPro" id="IPR003439">
    <property type="entry name" value="ABC_transporter-like_ATP-bd"/>
</dbReference>
<dbReference type="InterPro" id="IPR017871">
    <property type="entry name" value="ABC_transporter-like_CS"/>
</dbReference>
<dbReference type="InterPro" id="IPR027417">
    <property type="entry name" value="P-loop_NTPase"/>
</dbReference>
<dbReference type="InterPro" id="IPR005670">
    <property type="entry name" value="PstB-like"/>
</dbReference>
<dbReference type="NCBIfam" id="TIGR00972">
    <property type="entry name" value="3a0107s01c2"/>
    <property type="match status" value="1"/>
</dbReference>
<dbReference type="PANTHER" id="PTHR43423">
    <property type="entry name" value="ABC TRANSPORTER I FAMILY MEMBER 17"/>
    <property type="match status" value="1"/>
</dbReference>
<dbReference type="PANTHER" id="PTHR43423:SF1">
    <property type="entry name" value="ABC TRANSPORTER I FAMILY MEMBER 17"/>
    <property type="match status" value="1"/>
</dbReference>
<dbReference type="Pfam" id="PF00005">
    <property type="entry name" value="ABC_tran"/>
    <property type="match status" value="1"/>
</dbReference>
<dbReference type="SMART" id="SM00382">
    <property type="entry name" value="AAA"/>
    <property type="match status" value="1"/>
</dbReference>
<dbReference type="SUPFAM" id="SSF52540">
    <property type="entry name" value="P-loop containing nucleoside triphosphate hydrolases"/>
    <property type="match status" value="1"/>
</dbReference>
<dbReference type="PROSITE" id="PS00211">
    <property type="entry name" value="ABC_TRANSPORTER_1"/>
    <property type="match status" value="1"/>
</dbReference>
<dbReference type="PROSITE" id="PS50893">
    <property type="entry name" value="ABC_TRANSPORTER_2"/>
    <property type="match status" value="1"/>
</dbReference>
<dbReference type="PROSITE" id="PS51238">
    <property type="entry name" value="PSTB"/>
    <property type="match status" value="1"/>
</dbReference>
<organism>
    <name type="scientific">Brucella melitensis biotype 1 (strain ATCC 23456 / CCUG 17765 / NCTC 10094 / 16M)</name>
    <dbReference type="NCBI Taxonomy" id="224914"/>
    <lineage>
        <taxon>Bacteria</taxon>
        <taxon>Pseudomonadati</taxon>
        <taxon>Pseudomonadota</taxon>
        <taxon>Alphaproteobacteria</taxon>
        <taxon>Hyphomicrobiales</taxon>
        <taxon>Brucellaceae</taxon>
        <taxon>Brucella/Ochrobactrum group</taxon>
        <taxon>Brucella</taxon>
    </lineage>
</organism>
<accession>P63361</accession>
<accession>Q8FXV6</accession>
<accession>Q8YE92</accession>
<name>PSTB_BRUME</name>
<comment type="function">
    <text evidence="1">Part of the ABC transporter complex PstSACB involved in phosphate import. Responsible for energy coupling to the transport system.</text>
</comment>
<comment type="catalytic activity">
    <reaction evidence="1">
        <text>phosphate(out) + ATP + H2O = ADP + 2 phosphate(in) + H(+)</text>
        <dbReference type="Rhea" id="RHEA:24440"/>
        <dbReference type="ChEBI" id="CHEBI:15377"/>
        <dbReference type="ChEBI" id="CHEBI:15378"/>
        <dbReference type="ChEBI" id="CHEBI:30616"/>
        <dbReference type="ChEBI" id="CHEBI:43474"/>
        <dbReference type="ChEBI" id="CHEBI:456216"/>
        <dbReference type="EC" id="7.3.2.1"/>
    </reaction>
</comment>
<comment type="subunit">
    <text evidence="1">The complex is composed of two ATP-binding proteins (PstB), two transmembrane proteins (PstC and PstA) and a solute-binding protein (PstS).</text>
</comment>
<comment type="subcellular location">
    <subcellularLocation>
        <location evidence="1">Cell inner membrane</location>
        <topology evidence="1">Peripheral membrane protein</topology>
    </subcellularLocation>
</comment>
<comment type="similarity">
    <text evidence="1">Belongs to the ABC transporter superfamily. Phosphate importer (TC 3.A.1.7) family.</text>
</comment>
<comment type="sequence caution" evidence="2">
    <conflict type="erroneous initiation">
        <sequence resource="EMBL-CDS" id="AAL53167"/>
    </conflict>
</comment>
<proteinExistence type="inferred from homology"/>
<keyword id="KW-0067">ATP-binding</keyword>
<keyword id="KW-0997">Cell inner membrane</keyword>
<keyword id="KW-1003">Cell membrane</keyword>
<keyword id="KW-0472">Membrane</keyword>
<keyword id="KW-0547">Nucleotide-binding</keyword>
<keyword id="KW-0592">Phosphate transport</keyword>
<keyword id="KW-1278">Translocase</keyword>
<keyword id="KW-0813">Transport</keyword>
<reference key="1">
    <citation type="journal article" date="2002" name="Proc. Natl. Acad. Sci. U.S.A.">
        <title>The genome sequence of the facultative intracellular pathogen Brucella melitensis.</title>
        <authorList>
            <person name="DelVecchio V.G."/>
            <person name="Kapatral V."/>
            <person name="Redkar R.J."/>
            <person name="Patra G."/>
            <person name="Mujer C."/>
            <person name="Los T."/>
            <person name="Ivanova N."/>
            <person name="Anderson I."/>
            <person name="Bhattacharyya A."/>
            <person name="Lykidis A."/>
            <person name="Reznik G."/>
            <person name="Jablonski L."/>
            <person name="Larsen N."/>
            <person name="D'Souza M."/>
            <person name="Bernal A."/>
            <person name="Mazur M."/>
            <person name="Goltsman E."/>
            <person name="Selkov E."/>
            <person name="Elzer P.H."/>
            <person name="Hagius S."/>
            <person name="O'Callaghan D."/>
            <person name="Letesson J.-J."/>
            <person name="Haselkorn R."/>
            <person name="Kyrpides N.C."/>
            <person name="Overbeek R."/>
        </authorList>
    </citation>
    <scope>NUCLEOTIDE SEQUENCE [LARGE SCALE GENOMIC DNA]</scope>
    <source>
        <strain>ATCC 23456 / CCUG 17765 / NCTC 10094 / 16M</strain>
    </source>
</reference>
<protein>
    <recommendedName>
        <fullName evidence="1">Phosphate import ATP-binding protein PstB</fullName>
        <ecNumber evidence="1">7.3.2.1</ecNumber>
    </recommendedName>
    <alternativeName>
        <fullName evidence="1">ABC phosphate transporter</fullName>
    </alternativeName>
    <alternativeName>
        <fullName evidence="1">Phosphate-transporting ATPase</fullName>
    </alternativeName>
</protein>
<sequence length="273" mass="30257">MNLMAERSLENAVGEKMNATASSIKMRGEKVCVFYGEKQALFDVDLDIPEKMVTALIGPSGCGKSTFLRSLNRMNDTIEGCRIAGRITLDNEDIYDPRLDVVELRARVGMVFQKPNPFPKSIYENVAYGPRIHGLARSKAELEEIVVTSLQKASLFEEVKDRLHDAGTGLSGGQQQRLCIARAIAVSPEVILMDEPCSALDPIATAKVEELIDELRQNFTIVIVTHSMQQAARVSQRTAMFHLGNLVEVGDTEMMFTAPTEKRTQDYITGRFG</sequence>
<gene>
    <name evidence="1" type="primary">pstB</name>
    <name type="ordered locus">BMEI1986</name>
</gene>
<feature type="chain" id="PRO_0000092793" description="Phosphate import ATP-binding protein PstB">
    <location>
        <begin position="1"/>
        <end position="273"/>
    </location>
</feature>
<feature type="domain" description="ABC transporter" evidence="1">
    <location>
        <begin position="26"/>
        <end position="268"/>
    </location>
</feature>
<feature type="binding site" evidence="1">
    <location>
        <begin position="58"/>
        <end position="65"/>
    </location>
    <ligand>
        <name>ATP</name>
        <dbReference type="ChEBI" id="CHEBI:30616"/>
    </ligand>
</feature>